<accession>Q97ZJ3</accession>
<keyword id="KW-0963">Cytoplasm</keyword>
<keyword id="KW-0324">Glycolysis</keyword>
<keyword id="KW-0456">Lyase</keyword>
<keyword id="KW-0460">Magnesium</keyword>
<keyword id="KW-0479">Metal-binding</keyword>
<keyword id="KW-1185">Reference proteome</keyword>
<keyword id="KW-0964">Secreted</keyword>
<organism>
    <name type="scientific">Saccharolobus solfataricus (strain ATCC 35092 / DSM 1617 / JCM 11322 / P2)</name>
    <name type="common">Sulfolobus solfataricus</name>
    <dbReference type="NCBI Taxonomy" id="273057"/>
    <lineage>
        <taxon>Archaea</taxon>
        <taxon>Thermoproteota</taxon>
        <taxon>Thermoprotei</taxon>
        <taxon>Sulfolobales</taxon>
        <taxon>Sulfolobaceae</taxon>
        <taxon>Saccharolobus</taxon>
    </lineage>
</organism>
<feature type="chain" id="PRO_0000134035" description="Enolase">
    <location>
        <begin position="1"/>
        <end position="419"/>
    </location>
</feature>
<feature type="active site" description="Proton donor" evidence="1">
    <location>
        <position position="205"/>
    </location>
</feature>
<feature type="active site" description="Proton acceptor" evidence="1">
    <location>
        <position position="334"/>
    </location>
</feature>
<feature type="binding site" evidence="1">
    <location>
        <position position="161"/>
    </location>
    <ligand>
        <name>(2R)-2-phosphoglycerate</name>
        <dbReference type="ChEBI" id="CHEBI:58289"/>
    </ligand>
</feature>
<feature type="binding site" evidence="1">
    <location>
        <position position="240"/>
    </location>
    <ligand>
        <name>Mg(2+)</name>
        <dbReference type="ChEBI" id="CHEBI:18420"/>
    </ligand>
</feature>
<feature type="binding site" evidence="1">
    <location>
        <position position="283"/>
    </location>
    <ligand>
        <name>Mg(2+)</name>
        <dbReference type="ChEBI" id="CHEBI:18420"/>
    </ligand>
</feature>
<feature type="binding site" evidence="1">
    <location>
        <position position="309"/>
    </location>
    <ligand>
        <name>Mg(2+)</name>
        <dbReference type="ChEBI" id="CHEBI:18420"/>
    </ligand>
</feature>
<feature type="binding site" evidence="1">
    <location>
        <position position="334"/>
    </location>
    <ligand>
        <name>(2R)-2-phosphoglycerate</name>
        <dbReference type="ChEBI" id="CHEBI:58289"/>
    </ligand>
</feature>
<feature type="binding site" evidence="1">
    <location>
        <position position="363"/>
    </location>
    <ligand>
        <name>(2R)-2-phosphoglycerate</name>
        <dbReference type="ChEBI" id="CHEBI:58289"/>
    </ligand>
</feature>
<feature type="binding site" evidence="1">
    <location>
        <position position="364"/>
    </location>
    <ligand>
        <name>(2R)-2-phosphoglycerate</name>
        <dbReference type="ChEBI" id="CHEBI:58289"/>
    </ligand>
</feature>
<feature type="binding site" evidence="1">
    <location>
        <position position="385"/>
    </location>
    <ligand>
        <name>(2R)-2-phosphoglycerate</name>
        <dbReference type="ChEBI" id="CHEBI:58289"/>
    </ligand>
</feature>
<protein>
    <recommendedName>
        <fullName evidence="1">Enolase</fullName>
        <ecNumber evidence="1">4.2.1.11</ecNumber>
    </recommendedName>
    <alternativeName>
        <fullName evidence="1">2-phospho-D-glycerate hydro-lyase</fullName>
    </alternativeName>
    <alternativeName>
        <fullName evidence="1">2-phosphoglycerate dehydratase</fullName>
    </alternativeName>
</protein>
<name>ENO_SACS2</name>
<comment type="function">
    <text evidence="1">Catalyzes the reversible conversion of 2-phosphoglycerate (2-PG) into phosphoenolpyruvate (PEP). It is essential for the degradation of carbohydrates via glycolysis.</text>
</comment>
<comment type="catalytic activity">
    <reaction evidence="1">
        <text>(2R)-2-phosphoglycerate = phosphoenolpyruvate + H2O</text>
        <dbReference type="Rhea" id="RHEA:10164"/>
        <dbReference type="ChEBI" id="CHEBI:15377"/>
        <dbReference type="ChEBI" id="CHEBI:58289"/>
        <dbReference type="ChEBI" id="CHEBI:58702"/>
        <dbReference type="EC" id="4.2.1.11"/>
    </reaction>
</comment>
<comment type="cofactor">
    <cofactor evidence="1">
        <name>Mg(2+)</name>
        <dbReference type="ChEBI" id="CHEBI:18420"/>
    </cofactor>
    <text evidence="1">Binds a second Mg(2+) ion via substrate during catalysis.</text>
</comment>
<comment type="pathway">
    <text evidence="1">Carbohydrate degradation; glycolysis; pyruvate from D-glyceraldehyde 3-phosphate: step 4/5.</text>
</comment>
<comment type="subcellular location">
    <subcellularLocation>
        <location evidence="1">Cytoplasm</location>
    </subcellularLocation>
    <subcellularLocation>
        <location evidence="1">Secreted</location>
    </subcellularLocation>
    <subcellularLocation>
        <location evidence="1">Cell surface</location>
    </subcellularLocation>
    <text evidence="1">Fractions of enolase are present in both the cytoplasm and on the cell surface.</text>
</comment>
<comment type="similarity">
    <text evidence="1">Belongs to the enolase family.</text>
</comment>
<proteinExistence type="inferred from homology"/>
<evidence type="ECO:0000255" key="1">
    <source>
        <dbReference type="HAMAP-Rule" id="MF_00318"/>
    </source>
</evidence>
<gene>
    <name evidence="1" type="primary">eno</name>
    <name type="ordered locus">SSO0913</name>
</gene>
<sequence>MINRFSIEKVKGLEIVDSRGNPTIRVFIRTSDGVESFGDAPAGASKGTREAVEVRDENGLTVKRAVDIVNYIIDPALHGIDVREQGIIDKLLKDIDSTENKSKLGGNTIIATSIAALKTASKALGLEVFKYISGPRLPKIPIPLLNIINGGLHAGNKLKIQEFIIVPIKFNTFKEALFAAIDVYRTLKGLITERYGKIYTAVGDEGGFSPPLEDTREALDLIYTSINNAGYEGKIYMGMDAAGSDFYDSKKEKYIIDGRELDPNQLLEFYLDLVKQYPIVYLEDPFEENSFDMFSQLQNKLSSTIITGDDLYTTNIKYLKIGIEKRSTKGVIVKPNQVGTISETFEFTNLARRNSMKLITSHRSGETEDNFIADFAVGIESDFIKVGAPARGERTSKYNKLLEIENKFGLEYEGKYFYL</sequence>
<reference key="1">
    <citation type="journal article" date="2001" name="Proc. Natl. Acad. Sci. U.S.A.">
        <title>The complete genome of the crenarchaeon Sulfolobus solfataricus P2.</title>
        <authorList>
            <person name="She Q."/>
            <person name="Singh R.K."/>
            <person name="Confalonieri F."/>
            <person name="Zivanovic Y."/>
            <person name="Allard G."/>
            <person name="Awayez M.J."/>
            <person name="Chan-Weiher C.C.-Y."/>
            <person name="Clausen I.G."/>
            <person name="Curtis B.A."/>
            <person name="De Moors A."/>
            <person name="Erauso G."/>
            <person name="Fletcher C."/>
            <person name="Gordon P.M.K."/>
            <person name="Heikamp-de Jong I."/>
            <person name="Jeffries A.C."/>
            <person name="Kozera C.J."/>
            <person name="Medina N."/>
            <person name="Peng X."/>
            <person name="Thi-Ngoc H.P."/>
            <person name="Redder P."/>
            <person name="Schenk M.E."/>
            <person name="Theriault C."/>
            <person name="Tolstrup N."/>
            <person name="Charlebois R.L."/>
            <person name="Doolittle W.F."/>
            <person name="Duguet M."/>
            <person name="Gaasterland T."/>
            <person name="Garrett R.A."/>
            <person name="Ragan M.A."/>
            <person name="Sensen C.W."/>
            <person name="Van der Oost J."/>
        </authorList>
    </citation>
    <scope>NUCLEOTIDE SEQUENCE [LARGE SCALE GENOMIC DNA]</scope>
    <source>
        <strain>ATCC 35092 / DSM 1617 / JCM 11322 / P2</strain>
    </source>
</reference>
<dbReference type="EC" id="4.2.1.11" evidence="1"/>
<dbReference type="EMBL" id="AE006641">
    <property type="protein sequence ID" value="AAK41195.1"/>
    <property type="molecule type" value="Genomic_DNA"/>
</dbReference>
<dbReference type="PIR" id="D90242">
    <property type="entry name" value="D90242"/>
</dbReference>
<dbReference type="RefSeq" id="WP_009992342.1">
    <property type="nucleotide sequence ID" value="NC_002754.1"/>
</dbReference>
<dbReference type="SMR" id="Q97ZJ3"/>
<dbReference type="FunCoup" id="Q97ZJ3">
    <property type="interactions" value="268"/>
</dbReference>
<dbReference type="STRING" id="273057.SSO0913"/>
<dbReference type="PaxDb" id="273057-SSO0913"/>
<dbReference type="EnsemblBacteria" id="AAK41195">
    <property type="protein sequence ID" value="AAK41195"/>
    <property type="gene ID" value="SSO0913"/>
</dbReference>
<dbReference type="GeneID" id="44129843"/>
<dbReference type="KEGG" id="sso:SSO0913"/>
<dbReference type="PATRIC" id="fig|273057.12.peg.915"/>
<dbReference type="eggNOG" id="arCOG01169">
    <property type="taxonomic scope" value="Archaea"/>
</dbReference>
<dbReference type="HOGENOM" id="CLU_031223_2_1_2"/>
<dbReference type="InParanoid" id="Q97ZJ3"/>
<dbReference type="PhylomeDB" id="Q97ZJ3"/>
<dbReference type="BRENDA" id="4.2.1.11">
    <property type="organism ID" value="6163"/>
</dbReference>
<dbReference type="UniPathway" id="UPA00109">
    <property type="reaction ID" value="UER00187"/>
</dbReference>
<dbReference type="Proteomes" id="UP000001974">
    <property type="component" value="Chromosome"/>
</dbReference>
<dbReference type="GO" id="GO:0009986">
    <property type="term" value="C:cell surface"/>
    <property type="evidence" value="ECO:0007669"/>
    <property type="project" value="UniProtKB-SubCell"/>
</dbReference>
<dbReference type="GO" id="GO:0005576">
    <property type="term" value="C:extracellular region"/>
    <property type="evidence" value="ECO:0007669"/>
    <property type="project" value="UniProtKB-SubCell"/>
</dbReference>
<dbReference type="GO" id="GO:0000015">
    <property type="term" value="C:phosphopyruvate hydratase complex"/>
    <property type="evidence" value="ECO:0000318"/>
    <property type="project" value="GO_Central"/>
</dbReference>
<dbReference type="GO" id="GO:0000287">
    <property type="term" value="F:magnesium ion binding"/>
    <property type="evidence" value="ECO:0007669"/>
    <property type="project" value="UniProtKB-UniRule"/>
</dbReference>
<dbReference type="GO" id="GO:0004634">
    <property type="term" value="F:phosphopyruvate hydratase activity"/>
    <property type="evidence" value="ECO:0000318"/>
    <property type="project" value="GO_Central"/>
</dbReference>
<dbReference type="GO" id="GO:0006096">
    <property type="term" value="P:glycolytic process"/>
    <property type="evidence" value="ECO:0000318"/>
    <property type="project" value="GO_Central"/>
</dbReference>
<dbReference type="CDD" id="cd03313">
    <property type="entry name" value="enolase"/>
    <property type="match status" value="1"/>
</dbReference>
<dbReference type="Gene3D" id="3.20.20.120">
    <property type="entry name" value="Enolase-like C-terminal domain"/>
    <property type="match status" value="1"/>
</dbReference>
<dbReference type="Gene3D" id="3.30.390.10">
    <property type="entry name" value="Enolase-like, N-terminal domain"/>
    <property type="match status" value="1"/>
</dbReference>
<dbReference type="HAMAP" id="MF_00318">
    <property type="entry name" value="Enolase"/>
    <property type="match status" value="1"/>
</dbReference>
<dbReference type="InterPro" id="IPR000941">
    <property type="entry name" value="Enolase"/>
</dbReference>
<dbReference type="InterPro" id="IPR036849">
    <property type="entry name" value="Enolase-like_C_sf"/>
</dbReference>
<dbReference type="InterPro" id="IPR029017">
    <property type="entry name" value="Enolase-like_N"/>
</dbReference>
<dbReference type="InterPro" id="IPR020810">
    <property type="entry name" value="Enolase_C"/>
</dbReference>
<dbReference type="InterPro" id="IPR020809">
    <property type="entry name" value="Enolase_CS"/>
</dbReference>
<dbReference type="InterPro" id="IPR020811">
    <property type="entry name" value="Enolase_N"/>
</dbReference>
<dbReference type="NCBIfam" id="TIGR01060">
    <property type="entry name" value="eno"/>
    <property type="match status" value="1"/>
</dbReference>
<dbReference type="PANTHER" id="PTHR11902">
    <property type="entry name" value="ENOLASE"/>
    <property type="match status" value="1"/>
</dbReference>
<dbReference type="PANTHER" id="PTHR11902:SF1">
    <property type="entry name" value="ENOLASE"/>
    <property type="match status" value="1"/>
</dbReference>
<dbReference type="Pfam" id="PF00113">
    <property type="entry name" value="Enolase_C"/>
    <property type="match status" value="1"/>
</dbReference>
<dbReference type="Pfam" id="PF03952">
    <property type="entry name" value="Enolase_N"/>
    <property type="match status" value="1"/>
</dbReference>
<dbReference type="PIRSF" id="PIRSF001400">
    <property type="entry name" value="Enolase"/>
    <property type="match status" value="1"/>
</dbReference>
<dbReference type="PRINTS" id="PR00148">
    <property type="entry name" value="ENOLASE"/>
</dbReference>
<dbReference type="SFLD" id="SFLDS00001">
    <property type="entry name" value="Enolase"/>
    <property type="match status" value="1"/>
</dbReference>
<dbReference type="SFLD" id="SFLDF00002">
    <property type="entry name" value="enolase"/>
    <property type="match status" value="1"/>
</dbReference>
<dbReference type="SMART" id="SM01192">
    <property type="entry name" value="Enolase_C"/>
    <property type="match status" value="1"/>
</dbReference>
<dbReference type="SMART" id="SM01193">
    <property type="entry name" value="Enolase_N"/>
    <property type="match status" value="1"/>
</dbReference>
<dbReference type="SUPFAM" id="SSF51604">
    <property type="entry name" value="Enolase C-terminal domain-like"/>
    <property type="match status" value="1"/>
</dbReference>
<dbReference type="SUPFAM" id="SSF54826">
    <property type="entry name" value="Enolase N-terminal domain-like"/>
    <property type="match status" value="1"/>
</dbReference>
<dbReference type="PROSITE" id="PS00164">
    <property type="entry name" value="ENOLASE"/>
    <property type="match status" value="1"/>
</dbReference>